<protein>
    <recommendedName>
        <fullName evidence="1">Aspartyl/glutamyl-tRNA(Asn/Gln) amidotransferase subunit C</fullName>
        <shortName evidence="1">Asp/Glu-ADT subunit C</shortName>
        <ecNumber evidence="1">6.3.5.-</ecNumber>
    </recommendedName>
</protein>
<name>GATC_CHLTB</name>
<sequence length="100" mass="11074">MTESYVNKEEIISLAKNAALELEDAHVEEFVTSMNDVIALMQEVIAIDISDIILEATVHHFVGPEDLREDMVTSDFTQEEFLSNVPVSLGGLVKVPTVIK</sequence>
<dbReference type="EC" id="6.3.5.-" evidence="1"/>
<dbReference type="EMBL" id="AM884177">
    <property type="protein sequence ID" value="CAP06650.1"/>
    <property type="molecule type" value="Genomic_DNA"/>
</dbReference>
<dbReference type="RefSeq" id="WP_009871348.1">
    <property type="nucleotide sequence ID" value="NC_010280.2"/>
</dbReference>
<dbReference type="SMR" id="B0BAY8"/>
<dbReference type="KEGG" id="ctl:CTLon_0252"/>
<dbReference type="HOGENOM" id="CLU_105899_1_2_0"/>
<dbReference type="Proteomes" id="UP001154401">
    <property type="component" value="Chromosome"/>
</dbReference>
<dbReference type="GO" id="GO:0050566">
    <property type="term" value="F:asparaginyl-tRNA synthase (glutamine-hydrolyzing) activity"/>
    <property type="evidence" value="ECO:0007669"/>
    <property type="project" value="RHEA"/>
</dbReference>
<dbReference type="GO" id="GO:0005524">
    <property type="term" value="F:ATP binding"/>
    <property type="evidence" value="ECO:0007669"/>
    <property type="project" value="UniProtKB-KW"/>
</dbReference>
<dbReference type="GO" id="GO:0050567">
    <property type="term" value="F:glutaminyl-tRNA synthase (glutamine-hydrolyzing) activity"/>
    <property type="evidence" value="ECO:0007669"/>
    <property type="project" value="UniProtKB-UniRule"/>
</dbReference>
<dbReference type="GO" id="GO:0006450">
    <property type="term" value="P:regulation of translational fidelity"/>
    <property type="evidence" value="ECO:0007669"/>
    <property type="project" value="InterPro"/>
</dbReference>
<dbReference type="GO" id="GO:0006412">
    <property type="term" value="P:translation"/>
    <property type="evidence" value="ECO:0007669"/>
    <property type="project" value="UniProtKB-UniRule"/>
</dbReference>
<dbReference type="HAMAP" id="MF_00122">
    <property type="entry name" value="GatC"/>
    <property type="match status" value="1"/>
</dbReference>
<dbReference type="InterPro" id="IPR036113">
    <property type="entry name" value="Asp/Glu-ADT_sf_sub_c"/>
</dbReference>
<dbReference type="InterPro" id="IPR003837">
    <property type="entry name" value="GatC"/>
</dbReference>
<dbReference type="NCBIfam" id="TIGR00135">
    <property type="entry name" value="gatC"/>
    <property type="match status" value="1"/>
</dbReference>
<dbReference type="Pfam" id="PF02686">
    <property type="entry name" value="GatC"/>
    <property type="match status" value="1"/>
</dbReference>
<dbReference type="SUPFAM" id="SSF141000">
    <property type="entry name" value="Glu-tRNAGln amidotransferase C subunit"/>
    <property type="match status" value="1"/>
</dbReference>
<proteinExistence type="inferred from homology"/>
<reference key="1">
    <citation type="journal article" date="2008" name="Genome Res.">
        <title>Chlamydia trachomatis: genome sequence analysis of lymphogranuloma venereum isolates.</title>
        <authorList>
            <person name="Thomson N.R."/>
            <person name="Holden M.T.G."/>
            <person name="Carder C."/>
            <person name="Lennard N."/>
            <person name="Lockey S.J."/>
            <person name="Marsh P."/>
            <person name="Skipp P."/>
            <person name="O'Connor C.D."/>
            <person name="Goodhead I."/>
            <person name="Norbertzcak H."/>
            <person name="Harris B."/>
            <person name="Ormond D."/>
            <person name="Rance R."/>
            <person name="Quail M.A."/>
            <person name="Parkhill J."/>
            <person name="Stephens R.S."/>
            <person name="Clarke I.N."/>
        </authorList>
    </citation>
    <scope>NUCLEOTIDE SEQUENCE [LARGE SCALE GENOMIC DNA]</scope>
    <source>
        <strain>UCH-1/proctitis</strain>
    </source>
</reference>
<feature type="chain" id="PRO_1000095274" description="Aspartyl/glutamyl-tRNA(Asn/Gln) amidotransferase subunit C">
    <location>
        <begin position="1"/>
        <end position="100"/>
    </location>
</feature>
<organism>
    <name type="scientific">Chlamydia trachomatis serovar L2b (strain UCH-1/proctitis)</name>
    <dbReference type="NCBI Taxonomy" id="471473"/>
    <lineage>
        <taxon>Bacteria</taxon>
        <taxon>Pseudomonadati</taxon>
        <taxon>Chlamydiota</taxon>
        <taxon>Chlamydiia</taxon>
        <taxon>Chlamydiales</taxon>
        <taxon>Chlamydiaceae</taxon>
        <taxon>Chlamydia/Chlamydophila group</taxon>
        <taxon>Chlamydia</taxon>
    </lineage>
</organism>
<comment type="function">
    <text evidence="1">Allows the formation of correctly charged Asn-tRNA(Asn) or Gln-tRNA(Gln) through the transamidation of misacylated Asp-tRNA(Asn) or Glu-tRNA(Gln) in organisms which lack either or both of asparaginyl-tRNA or glutaminyl-tRNA synthetases. The reaction takes place in the presence of glutamine and ATP through an activated phospho-Asp-tRNA(Asn) or phospho-Glu-tRNA(Gln).</text>
</comment>
<comment type="catalytic activity">
    <reaction evidence="1">
        <text>L-glutamyl-tRNA(Gln) + L-glutamine + ATP + H2O = L-glutaminyl-tRNA(Gln) + L-glutamate + ADP + phosphate + H(+)</text>
        <dbReference type="Rhea" id="RHEA:17521"/>
        <dbReference type="Rhea" id="RHEA-COMP:9681"/>
        <dbReference type="Rhea" id="RHEA-COMP:9684"/>
        <dbReference type="ChEBI" id="CHEBI:15377"/>
        <dbReference type="ChEBI" id="CHEBI:15378"/>
        <dbReference type="ChEBI" id="CHEBI:29985"/>
        <dbReference type="ChEBI" id="CHEBI:30616"/>
        <dbReference type="ChEBI" id="CHEBI:43474"/>
        <dbReference type="ChEBI" id="CHEBI:58359"/>
        <dbReference type="ChEBI" id="CHEBI:78520"/>
        <dbReference type="ChEBI" id="CHEBI:78521"/>
        <dbReference type="ChEBI" id="CHEBI:456216"/>
    </reaction>
</comment>
<comment type="catalytic activity">
    <reaction evidence="1">
        <text>L-aspartyl-tRNA(Asn) + L-glutamine + ATP + H2O = L-asparaginyl-tRNA(Asn) + L-glutamate + ADP + phosphate + 2 H(+)</text>
        <dbReference type="Rhea" id="RHEA:14513"/>
        <dbReference type="Rhea" id="RHEA-COMP:9674"/>
        <dbReference type="Rhea" id="RHEA-COMP:9677"/>
        <dbReference type="ChEBI" id="CHEBI:15377"/>
        <dbReference type="ChEBI" id="CHEBI:15378"/>
        <dbReference type="ChEBI" id="CHEBI:29985"/>
        <dbReference type="ChEBI" id="CHEBI:30616"/>
        <dbReference type="ChEBI" id="CHEBI:43474"/>
        <dbReference type="ChEBI" id="CHEBI:58359"/>
        <dbReference type="ChEBI" id="CHEBI:78515"/>
        <dbReference type="ChEBI" id="CHEBI:78516"/>
        <dbReference type="ChEBI" id="CHEBI:456216"/>
    </reaction>
</comment>
<comment type="subunit">
    <text evidence="1">Heterotrimer of A, B and C subunits.</text>
</comment>
<comment type="similarity">
    <text evidence="1">Belongs to the GatC family.</text>
</comment>
<keyword id="KW-0067">ATP-binding</keyword>
<keyword id="KW-0436">Ligase</keyword>
<keyword id="KW-0547">Nucleotide-binding</keyword>
<keyword id="KW-0648">Protein biosynthesis</keyword>
<gene>
    <name evidence="1" type="primary">gatC</name>
    <name type="ordered locus">CTLon_0252</name>
</gene>
<accession>B0BAY8</accession>
<evidence type="ECO:0000255" key="1">
    <source>
        <dbReference type="HAMAP-Rule" id="MF_00122"/>
    </source>
</evidence>